<protein>
    <recommendedName>
        <fullName evidence="1">Putative phosphoesterase BCAH187_A1386</fullName>
        <ecNumber evidence="1">3.1.-.-</ecNumber>
    </recommendedName>
</protein>
<reference key="1">
    <citation type="submission" date="2008-10" db="EMBL/GenBank/DDBJ databases">
        <title>Genome sequence of Bacillus cereus AH187.</title>
        <authorList>
            <person name="Dodson R.J."/>
            <person name="Durkin A.S."/>
            <person name="Rosovitz M.J."/>
            <person name="Rasko D.A."/>
            <person name="Kolsto A.B."/>
            <person name="Okstad O.A."/>
            <person name="Ravel J."/>
            <person name="Sutton G."/>
        </authorList>
    </citation>
    <scope>NUCLEOTIDE SEQUENCE [LARGE SCALE GENOMIC DNA]</scope>
    <source>
        <strain>AH187</strain>
    </source>
</reference>
<gene>
    <name type="ordered locus">BCAH187_A1386</name>
</gene>
<sequence length="172" mass="19878">MKLGIVIFPSKMIQDKANGLRKRYDPHYALVPPHITLKTPFETQDEQLESIVNELHTIASKTNPFTLHVGKVGSFAPVNNVIYFKVEKTPELTFLNEEMHSGFFTQEREYAFVPHLTIGQGLSDAEHADVLGRLRMKDFYYEQPIDRFHLLYQLENGTWTVHETFRLGKGNN</sequence>
<organism>
    <name type="scientific">Bacillus cereus (strain AH187)</name>
    <dbReference type="NCBI Taxonomy" id="405534"/>
    <lineage>
        <taxon>Bacteria</taxon>
        <taxon>Bacillati</taxon>
        <taxon>Bacillota</taxon>
        <taxon>Bacilli</taxon>
        <taxon>Bacillales</taxon>
        <taxon>Bacillaceae</taxon>
        <taxon>Bacillus</taxon>
        <taxon>Bacillus cereus group</taxon>
    </lineage>
</organism>
<accession>B7I0E0</accession>
<proteinExistence type="inferred from homology"/>
<feature type="chain" id="PRO_1000145935" description="Putative phosphoesterase BCAH187_A1386">
    <location>
        <begin position="1"/>
        <end position="172"/>
    </location>
</feature>
<feature type="short sequence motif" description="HXTX 1" evidence="1">
    <location>
        <begin position="34"/>
        <end position="37"/>
    </location>
</feature>
<feature type="short sequence motif" description="HXTX 2" evidence="1">
    <location>
        <begin position="115"/>
        <end position="118"/>
    </location>
</feature>
<feature type="active site" description="Proton donor" evidence="1">
    <location>
        <position position="34"/>
    </location>
</feature>
<feature type="active site" description="Proton acceptor" evidence="1">
    <location>
        <position position="115"/>
    </location>
</feature>
<keyword id="KW-0378">Hydrolase</keyword>
<comment type="similarity">
    <text evidence="1">Belongs to the 2H phosphoesterase superfamily. YjcG family.</text>
</comment>
<name>Y1386_BACC7</name>
<dbReference type="EC" id="3.1.-.-" evidence="1"/>
<dbReference type="EMBL" id="CP001177">
    <property type="protein sequence ID" value="ACJ77413.1"/>
    <property type="molecule type" value="Genomic_DNA"/>
</dbReference>
<dbReference type="SMR" id="B7I0E0"/>
<dbReference type="KEGG" id="bcr:BCAH187_A1386"/>
<dbReference type="HOGENOM" id="CLU_132020_0_0_9"/>
<dbReference type="Proteomes" id="UP000002214">
    <property type="component" value="Chromosome"/>
</dbReference>
<dbReference type="GO" id="GO:0016788">
    <property type="term" value="F:hydrolase activity, acting on ester bonds"/>
    <property type="evidence" value="ECO:0007669"/>
    <property type="project" value="UniProtKB-UniRule"/>
</dbReference>
<dbReference type="Gene3D" id="3.90.1140.10">
    <property type="entry name" value="Cyclic phosphodiesterase"/>
    <property type="match status" value="1"/>
</dbReference>
<dbReference type="HAMAP" id="MF_01444">
    <property type="entry name" value="2H_phosphoesterase_YjcG"/>
    <property type="match status" value="1"/>
</dbReference>
<dbReference type="InterPro" id="IPR050580">
    <property type="entry name" value="2H_phosphoesterase_YjcG-like"/>
</dbReference>
<dbReference type="InterPro" id="IPR009097">
    <property type="entry name" value="Cyclic_Pdiesterase"/>
</dbReference>
<dbReference type="InterPro" id="IPR022932">
    <property type="entry name" value="YjcG"/>
</dbReference>
<dbReference type="NCBIfam" id="NF010223">
    <property type="entry name" value="PRK13679.1"/>
    <property type="match status" value="1"/>
</dbReference>
<dbReference type="PANTHER" id="PTHR40037:SF1">
    <property type="entry name" value="PHOSPHOESTERASE SAOUHSC_00951-RELATED"/>
    <property type="match status" value="1"/>
</dbReference>
<dbReference type="PANTHER" id="PTHR40037">
    <property type="entry name" value="PHOSPHOESTERASE YJCG-RELATED"/>
    <property type="match status" value="1"/>
</dbReference>
<dbReference type="Pfam" id="PF13563">
    <property type="entry name" value="2_5_RNA_ligase2"/>
    <property type="match status" value="1"/>
</dbReference>
<dbReference type="SUPFAM" id="SSF55144">
    <property type="entry name" value="LigT-like"/>
    <property type="match status" value="1"/>
</dbReference>
<evidence type="ECO:0000255" key="1">
    <source>
        <dbReference type="HAMAP-Rule" id="MF_01444"/>
    </source>
</evidence>